<comment type="function">
    <text evidence="1">Located on the platform of the 30S subunit.</text>
</comment>
<comment type="subunit">
    <text evidence="1">Part of the 30S ribosomal subunit.</text>
</comment>
<comment type="similarity">
    <text evidence="1">Belongs to the universal ribosomal protein uS11 family.</text>
</comment>
<proteinExistence type="inferred from homology"/>
<dbReference type="EMBL" id="CP000477">
    <property type="protein sequence ID" value="ABK15387.1"/>
    <property type="molecule type" value="Genomic_DNA"/>
</dbReference>
<dbReference type="RefSeq" id="WP_011696765.1">
    <property type="nucleotide sequence ID" value="NC_008553.1"/>
</dbReference>
<dbReference type="SMR" id="A0B9L3"/>
<dbReference type="STRING" id="349307.Mthe_1620"/>
<dbReference type="GeneID" id="4462197"/>
<dbReference type="KEGG" id="mtp:Mthe_1620"/>
<dbReference type="HOGENOM" id="CLU_072439_6_1_2"/>
<dbReference type="OrthoDB" id="12054at2157"/>
<dbReference type="Proteomes" id="UP000000674">
    <property type="component" value="Chromosome"/>
</dbReference>
<dbReference type="GO" id="GO:1990904">
    <property type="term" value="C:ribonucleoprotein complex"/>
    <property type="evidence" value="ECO:0007669"/>
    <property type="project" value="UniProtKB-KW"/>
</dbReference>
<dbReference type="GO" id="GO:0005840">
    <property type="term" value="C:ribosome"/>
    <property type="evidence" value="ECO:0007669"/>
    <property type="project" value="UniProtKB-KW"/>
</dbReference>
<dbReference type="GO" id="GO:0019843">
    <property type="term" value="F:rRNA binding"/>
    <property type="evidence" value="ECO:0007669"/>
    <property type="project" value="UniProtKB-UniRule"/>
</dbReference>
<dbReference type="GO" id="GO:0003735">
    <property type="term" value="F:structural constituent of ribosome"/>
    <property type="evidence" value="ECO:0007669"/>
    <property type="project" value="InterPro"/>
</dbReference>
<dbReference type="GO" id="GO:0006412">
    <property type="term" value="P:translation"/>
    <property type="evidence" value="ECO:0007669"/>
    <property type="project" value="UniProtKB-UniRule"/>
</dbReference>
<dbReference type="FunFam" id="3.30.420.80:FF:000007">
    <property type="entry name" value="30S ribosomal protein S11"/>
    <property type="match status" value="1"/>
</dbReference>
<dbReference type="Gene3D" id="3.30.420.80">
    <property type="entry name" value="Ribosomal protein S11"/>
    <property type="match status" value="1"/>
</dbReference>
<dbReference type="HAMAP" id="MF_01310">
    <property type="entry name" value="Ribosomal_uS11"/>
    <property type="match status" value="1"/>
</dbReference>
<dbReference type="InterPro" id="IPR001971">
    <property type="entry name" value="Ribosomal_uS11"/>
</dbReference>
<dbReference type="InterPro" id="IPR019961">
    <property type="entry name" value="Ribosomal_uS11_archaeal"/>
</dbReference>
<dbReference type="InterPro" id="IPR018102">
    <property type="entry name" value="Ribosomal_uS11_CS"/>
</dbReference>
<dbReference type="InterPro" id="IPR036967">
    <property type="entry name" value="Ribosomal_uS11_sf"/>
</dbReference>
<dbReference type="NCBIfam" id="TIGR03628">
    <property type="entry name" value="arch_S11P"/>
    <property type="match status" value="1"/>
</dbReference>
<dbReference type="NCBIfam" id="NF007176">
    <property type="entry name" value="PRK09607.1"/>
    <property type="match status" value="1"/>
</dbReference>
<dbReference type="PANTHER" id="PTHR11759">
    <property type="entry name" value="40S RIBOSOMAL PROTEIN S14/30S RIBOSOMAL PROTEIN S11"/>
    <property type="match status" value="1"/>
</dbReference>
<dbReference type="Pfam" id="PF00411">
    <property type="entry name" value="Ribosomal_S11"/>
    <property type="match status" value="1"/>
</dbReference>
<dbReference type="PIRSF" id="PIRSF002131">
    <property type="entry name" value="Ribosomal_S11"/>
    <property type="match status" value="1"/>
</dbReference>
<dbReference type="SUPFAM" id="SSF53137">
    <property type="entry name" value="Translational machinery components"/>
    <property type="match status" value="1"/>
</dbReference>
<dbReference type="PROSITE" id="PS00054">
    <property type="entry name" value="RIBOSOMAL_S11"/>
    <property type="match status" value="1"/>
</dbReference>
<gene>
    <name evidence="1" type="primary">rps11</name>
    <name type="ordered locus">Mthe_1620</name>
</gene>
<organism>
    <name type="scientific">Methanothrix thermoacetophila (strain DSM 6194 / JCM 14653 / NBRC 101360 / PT)</name>
    <name type="common">Methanosaeta thermophila</name>
    <dbReference type="NCBI Taxonomy" id="349307"/>
    <lineage>
        <taxon>Archaea</taxon>
        <taxon>Methanobacteriati</taxon>
        <taxon>Methanobacteriota</taxon>
        <taxon>Stenosarchaea group</taxon>
        <taxon>Methanomicrobia</taxon>
        <taxon>Methanotrichales</taxon>
        <taxon>Methanotrichaceae</taxon>
        <taxon>Methanothrix</taxon>
    </lineage>
</organism>
<accession>A0B9L3</accession>
<feature type="chain" id="PRO_0000294898" description="Small ribosomal subunit protein uS11">
    <location>
        <begin position="1"/>
        <end position="129"/>
    </location>
</feature>
<feature type="region of interest" description="Disordered" evidence="2">
    <location>
        <begin position="108"/>
        <end position="129"/>
    </location>
</feature>
<protein>
    <recommendedName>
        <fullName evidence="1">Small ribosomal subunit protein uS11</fullName>
    </recommendedName>
    <alternativeName>
        <fullName evidence="3">30S ribosomal protein S11</fullName>
    </alternativeName>
</protein>
<evidence type="ECO:0000255" key="1">
    <source>
        <dbReference type="HAMAP-Rule" id="MF_01310"/>
    </source>
</evidence>
<evidence type="ECO:0000256" key="2">
    <source>
        <dbReference type="SAM" id="MobiDB-lite"/>
    </source>
</evidence>
<evidence type="ECO:0000305" key="3"/>
<name>RS11_METTP</name>
<sequence length="129" mass="13572">MTEGKWAIAHIYSSFNNTLITITDLTGAETIAKISGGMVVKAARDESSPYTAMQMAMQVAEQAKAKGIVGVHVKVRAPGGNKQRSPGPGAQAAIRALARAGLRIGRIEDVTPIPHDGTKPKGGKRGRRV</sequence>
<reference key="1">
    <citation type="submission" date="2006-10" db="EMBL/GenBank/DDBJ databases">
        <title>Complete sequence of Methanosaeta thermophila PT.</title>
        <authorList>
            <consortium name="US DOE Joint Genome Institute"/>
            <person name="Copeland A."/>
            <person name="Lucas S."/>
            <person name="Lapidus A."/>
            <person name="Barry K."/>
            <person name="Detter J.C."/>
            <person name="Glavina del Rio T."/>
            <person name="Hammon N."/>
            <person name="Israni S."/>
            <person name="Pitluck S."/>
            <person name="Chain P."/>
            <person name="Malfatti S."/>
            <person name="Shin M."/>
            <person name="Vergez L."/>
            <person name="Schmutz J."/>
            <person name="Larimer F."/>
            <person name="Land M."/>
            <person name="Hauser L."/>
            <person name="Kyrpides N."/>
            <person name="Kim E."/>
            <person name="Smith K.S."/>
            <person name="Ingram-Smith C."/>
            <person name="Richardson P."/>
        </authorList>
    </citation>
    <scope>NUCLEOTIDE SEQUENCE [LARGE SCALE GENOMIC DNA]</scope>
    <source>
        <strain>DSM 6194 / JCM 14653 / NBRC 101360 / PT</strain>
    </source>
</reference>
<keyword id="KW-1185">Reference proteome</keyword>
<keyword id="KW-0687">Ribonucleoprotein</keyword>
<keyword id="KW-0689">Ribosomal protein</keyword>
<keyword id="KW-0694">RNA-binding</keyword>
<keyword id="KW-0699">rRNA-binding</keyword>